<geneLocation type="chloroplast"/>
<sequence length="84" mass="9792">MPVKQQIGIVISNKMQKTIVVKIENRYPHPMYSKTLIKTKKYLAHDELGECNIGDQVLVEECRPLSKRKRWKLIKILSKSSLIN</sequence>
<organism>
    <name type="scientific">Phaeodactylum tricornutum (strain CCAP 1055/1)</name>
    <dbReference type="NCBI Taxonomy" id="556484"/>
    <lineage>
        <taxon>Eukaryota</taxon>
        <taxon>Sar</taxon>
        <taxon>Stramenopiles</taxon>
        <taxon>Ochrophyta</taxon>
        <taxon>Bacillariophyta</taxon>
        <taxon>Bacillariophyceae</taxon>
        <taxon>Bacillariophycidae</taxon>
        <taxon>Naviculales</taxon>
        <taxon>Phaeodactylaceae</taxon>
        <taxon>Phaeodactylum</taxon>
    </lineage>
</organism>
<name>RR17_PHATC</name>
<comment type="function">
    <text evidence="1">One of the primary rRNA binding proteins, it binds specifically to the 5'-end of 16S ribosomal RNA.</text>
</comment>
<comment type="subunit">
    <text evidence="1">Part of the 30S ribosomal subunit.</text>
</comment>
<comment type="subcellular location">
    <subcellularLocation>
        <location>Plastid</location>
        <location>Chloroplast</location>
    </subcellularLocation>
</comment>
<comment type="similarity">
    <text evidence="2">Belongs to the universal ribosomal protein uS17 family.</text>
</comment>
<keyword id="KW-0150">Chloroplast</keyword>
<keyword id="KW-0934">Plastid</keyword>
<keyword id="KW-1185">Reference proteome</keyword>
<keyword id="KW-0687">Ribonucleoprotein</keyword>
<keyword id="KW-0689">Ribosomal protein</keyword>
<keyword id="KW-0694">RNA-binding</keyword>
<keyword id="KW-0699">rRNA-binding</keyword>
<reference key="1">
    <citation type="journal article" date="2007" name="Mol. Genet. Genomics">
        <title>Chloroplast genomes of the diatoms Phaeodactylum tricornutum and Thalassiosira pseudonana: comparison with other plastid genomes of the red lineage.</title>
        <authorList>
            <person name="Oudot-Le Secq M.-P."/>
            <person name="Grimwood J."/>
            <person name="Shapiro H."/>
            <person name="Armbrust E.V."/>
            <person name="Bowler C."/>
            <person name="Green B.R."/>
        </authorList>
    </citation>
    <scope>NUCLEOTIDE SEQUENCE [LARGE SCALE GENOMIC DNA]</scope>
    <source>
        <strain>CCAP 1055/1</strain>
    </source>
</reference>
<gene>
    <name type="primary">rps17</name>
</gene>
<feature type="chain" id="PRO_0000276859" description="Small ribosomal subunit protein uS17c">
    <location>
        <begin position="1"/>
        <end position="84"/>
    </location>
</feature>
<dbReference type="EMBL" id="EF067920">
    <property type="protein sequence ID" value="ABK20686.1"/>
    <property type="molecule type" value="Genomic_DNA"/>
</dbReference>
<dbReference type="RefSeq" id="YP_874463.1">
    <property type="nucleotide sequence ID" value="NC_008588.1"/>
</dbReference>
<dbReference type="SMR" id="A0T0I8"/>
<dbReference type="STRING" id="556484.A0T0I8"/>
<dbReference type="GeneID" id="4524665"/>
<dbReference type="InParanoid" id="A0T0I8"/>
<dbReference type="Proteomes" id="UP000000759">
    <property type="component" value="Chloroplast"/>
</dbReference>
<dbReference type="GO" id="GO:0009507">
    <property type="term" value="C:chloroplast"/>
    <property type="evidence" value="ECO:0007669"/>
    <property type="project" value="UniProtKB-SubCell"/>
</dbReference>
<dbReference type="GO" id="GO:0005739">
    <property type="term" value="C:mitochondrion"/>
    <property type="evidence" value="ECO:0007669"/>
    <property type="project" value="TreeGrafter"/>
</dbReference>
<dbReference type="GO" id="GO:1990904">
    <property type="term" value="C:ribonucleoprotein complex"/>
    <property type="evidence" value="ECO:0007669"/>
    <property type="project" value="UniProtKB-KW"/>
</dbReference>
<dbReference type="GO" id="GO:0005840">
    <property type="term" value="C:ribosome"/>
    <property type="evidence" value="ECO:0007669"/>
    <property type="project" value="UniProtKB-KW"/>
</dbReference>
<dbReference type="GO" id="GO:0019843">
    <property type="term" value="F:rRNA binding"/>
    <property type="evidence" value="ECO:0007669"/>
    <property type="project" value="UniProtKB-UniRule"/>
</dbReference>
<dbReference type="GO" id="GO:0003735">
    <property type="term" value="F:structural constituent of ribosome"/>
    <property type="evidence" value="ECO:0007669"/>
    <property type="project" value="InterPro"/>
</dbReference>
<dbReference type="GO" id="GO:0006412">
    <property type="term" value="P:translation"/>
    <property type="evidence" value="ECO:0007669"/>
    <property type="project" value="UniProtKB-UniRule"/>
</dbReference>
<dbReference type="CDD" id="cd00364">
    <property type="entry name" value="Ribosomal_uS17"/>
    <property type="match status" value="1"/>
</dbReference>
<dbReference type="Gene3D" id="2.40.50.140">
    <property type="entry name" value="Nucleic acid-binding proteins"/>
    <property type="match status" value="1"/>
</dbReference>
<dbReference type="HAMAP" id="MF_01345_B">
    <property type="entry name" value="Ribosomal_uS17_B"/>
    <property type="match status" value="1"/>
</dbReference>
<dbReference type="InterPro" id="IPR012340">
    <property type="entry name" value="NA-bd_OB-fold"/>
</dbReference>
<dbReference type="InterPro" id="IPR000266">
    <property type="entry name" value="Ribosomal_uS17"/>
</dbReference>
<dbReference type="InterPro" id="IPR019984">
    <property type="entry name" value="Ribosomal_uS17_bact/chlr"/>
</dbReference>
<dbReference type="InterPro" id="IPR019979">
    <property type="entry name" value="Ribosomal_uS17_CS"/>
</dbReference>
<dbReference type="NCBIfam" id="NF004123">
    <property type="entry name" value="PRK05610.1"/>
    <property type="match status" value="1"/>
</dbReference>
<dbReference type="NCBIfam" id="TIGR03635">
    <property type="entry name" value="uS17_bact"/>
    <property type="match status" value="1"/>
</dbReference>
<dbReference type="PANTHER" id="PTHR10744">
    <property type="entry name" value="40S RIBOSOMAL PROTEIN S11 FAMILY MEMBER"/>
    <property type="match status" value="1"/>
</dbReference>
<dbReference type="PANTHER" id="PTHR10744:SF1">
    <property type="entry name" value="SMALL RIBOSOMAL SUBUNIT PROTEIN US17M"/>
    <property type="match status" value="1"/>
</dbReference>
<dbReference type="Pfam" id="PF00366">
    <property type="entry name" value="Ribosomal_S17"/>
    <property type="match status" value="1"/>
</dbReference>
<dbReference type="PRINTS" id="PR00973">
    <property type="entry name" value="RIBOSOMALS17"/>
</dbReference>
<dbReference type="SUPFAM" id="SSF50249">
    <property type="entry name" value="Nucleic acid-binding proteins"/>
    <property type="match status" value="1"/>
</dbReference>
<dbReference type="PROSITE" id="PS00056">
    <property type="entry name" value="RIBOSOMAL_S17"/>
    <property type="match status" value="1"/>
</dbReference>
<evidence type="ECO:0000250" key="1"/>
<evidence type="ECO:0000305" key="2"/>
<protein>
    <recommendedName>
        <fullName evidence="2">Small ribosomal subunit protein uS17c</fullName>
    </recommendedName>
    <alternativeName>
        <fullName>30S ribosomal protein S17, chloroplastic</fullName>
    </alternativeName>
</protein>
<accession>A0T0I8</accession>
<proteinExistence type="inferred from homology"/>